<name>MUTS2_BACAA</name>
<protein>
    <recommendedName>
        <fullName evidence="1">Endonuclease MutS2</fullName>
        <ecNumber evidence="1">3.1.-.-</ecNumber>
    </recommendedName>
    <alternativeName>
        <fullName evidence="1">Ribosome-associated protein quality control-upstream factor</fullName>
        <shortName evidence="1">RQC-upstream factor</shortName>
        <shortName evidence="1">RqcU</shortName>
        <ecNumber evidence="1">3.6.4.-</ecNumber>
    </alternativeName>
</protein>
<sequence>MLERTLRVLEYNKVKEQLLEHTASSLGRDKVKHLVPSTDFEEIVEMQDTTDEAAKVIRLKGSAPLGGITDIRSNVKRAKIGSMLSPNELLDIANTMYGSRNMKRFIEDMVDNGVELPILETHVAQIVSLYDLEKKITNCIGDGGEVVDSASDKLRGIRTQIRTAESRIREKLENMTRSSNAQKMLSDSIVTIRNERYVIPVKQEYRGVYGGIVHDQSASGQTLFIEPQVIVELNNALQEARVKEKQEIERILLMLTEEVAVEADIVLSNVEVVANLDFIFAKAFYAKRIKATKPIVNNERYMDLRQARHPLIDPEVIVPNNIMLGKDFTTIVITGPNTGGKTVTLKTVGICVLMAQSGLHIPVMDESEICVFKNIFADIGDEQSIEQSLSTFSSHMVNIVDILEKADFESLVLFDELGAGTDPQEGAALAISILDEVCNRGARVVATTHYPELKAYGYNREQVINASVEFDVNTLSPTHKLLIGVPGRSNAFEISKRLGLSNRVIDQARNHISTDTNKIENMIAKLEESQKNAERDWNEAEALRKQSEKLHRELQRQIIEFNEERDERLLKAQKEGEEKVEAAKKEAEGIIQELRQLRKAQLANVKDHELIEAKSRLEGAAPELVKKQKVNVKNTAPKQQLRAGDEVKVLTFGQKGQLLEKVSDTEWSVQIGILKMKVKESNMEYINTPKQTEKKAVATVKGRDYHVSLELDLRGERFENAMARVEKYLDDAQLASYPRVSIIHGKGTGALRQGVQDYLKKHRGVKTFRYGDMGEGGLGVTVVELK</sequence>
<organism>
    <name type="scientific">Bacillus anthracis (strain A0248)</name>
    <dbReference type="NCBI Taxonomy" id="592021"/>
    <lineage>
        <taxon>Bacteria</taxon>
        <taxon>Bacillati</taxon>
        <taxon>Bacillota</taxon>
        <taxon>Bacilli</taxon>
        <taxon>Bacillales</taxon>
        <taxon>Bacillaceae</taxon>
        <taxon>Bacillus</taxon>
        <taxon>Bacillus cereus group</taxon>
    </lineage>
</organism>
<feature type="chain" id="PRO_1000192210" description="Endonuclease MutS2">
    <location>
        <begin position="1"/>
        <end position="786"/>
    </location>
</feature>
<feature type="domain" description="Smr" evidence="1">
    <location>
        <begin position="711"/>
        <end position="786"/>
    </location>
</feature>
<feature type="binding site" evidence="1">
    <location>
        <begin position="335"/>
        <end position="342"/>
    </location>
    <ligand>
        <name>ATP</name>
        <dbReference type="ChEBI" id="CHEBI:30616"/>
    </ligand>
</feature>
<evidence type="ECO:0000255" key="1">
    <source>
        <dbReference type="HAMAP-Rule" id="MF_00092"/>
    </source>
</evidence>
<gene>
    <name evidence="1" type="primary">mutS2</name>
    <name evidence="1" type="synonym">rqcU</name>
    <name type="ordered locus">BAA_4805</name>
</gene>
<proteinExistence type="inferred from homology"/>
<dbReference type="EC" id="3.1.-.-" evidence="1"/>
<dbReference type="EC" id="3.6.4.-" evidence="1"/>
<dbReference type="EMBL" id="CP001598">
    <property type="protein sequence ID" value="ACQ49242.1"/>
    <property type="molecule type" value="Genomic_DNA"/>
</dbReference>
<dbReference type="RefSeq" id="WP_000893730.1">
    <property type="nucleotide sequence ID" value="NC_012659.1"/>
</dbReference>
<dbReference type="SMR" id="C3PAE0"/>
<dbReference type="GeneID" id="45024423"/>
<dbReference type="KEGG" id="bai:BAA_4805"/>
<dbReference type="HOGENOM" id="CLU_011252_2_1_9"/>
<dbReference type="GO" id="GO:0005524">
    <property type="term" value="F:ATP binding"/>
    <property type="evidence" value="ECO:0007669"/>
    <property type="project" value="UniProtKB-UniRule"/>
</dbReference>
<dbReference type="GO" id="GO:0016887">
    <property type="term" value="F:ATP hydrolysis activity"/>
    <property type="evidence" value="ECO:0007669"/>
    <property type="project" value="InterPro"/>
</dbReference>
<dbReference type="GO" id="GO:0140664">
    <property type="term" value="F:ATP-dependent DNA damage sensor activity"/>
    <property type="evidence" value="ECO:0007669"/>
    <property type="project" value="InterPro"/>
</dbReference>
<dbReference type="GO" id="GO:0004519">
    <property type="term" value="F:endonuclease activity"/>
    <property type="evidence" value="ECO:0007669"/>
    <property type="project" value="UniProtKB-UniRule"/>
</dbReference>
<dbReference type="GO" id="GO:0030983">
    <property type="term" value="F:mismatched DNA binding"/>
    <property type="evidence" value="ECO:0007669"/>
    <property type="project" value="InterPro"/>
</dbReference>
<dbReference type="GO" id="GO:0043023">
    <property type="term" value="F:ribosomal large subunit binding"/>
    <property type="evidence" value="ECO:0007669"/>
    <property type="project" value="UniProtKB-UniRule"/>
</dbReference>
<dbReference type="GO" id="GO:0019843">
    <property type="term" value="F:rRNA binding"/>
    <property type="evidence" value="ECO:0007669"/>
    <property type="project" value="UniProtKB-UniRule"/>
</dbReference>
<dbReference type="GO" id="GO:0006298">
    <property type="term" value="P:mismatch repair"/>
    <property type="evidence" value="ECO:0007669"/>
    <property type="project" value="InterPro"/>
</dbReference>
<dbReference type="GO" id="GO:0045910">
    <property type="term" value="P:negative regulation of DNA recombination"/>
    <property type="evidence" value="ECO:0007669"/>
    <property type="project" value="InterPro"/>
</dbReference>
<dbReference type="GO" id="GO:0072344">
    <property type="term" value="P:rescue of stalled ribosome"/>
    <property type="evidence" value="ECO:0007669"/>
    <property type="project" value="UniProtKB-UniRule"/>
</dbReference>
<dbReference type="CDD" id="cd03280">
    <property type="entry name" value="ABC_MutS2"/>
    <property type="match status" value="1"/>
</dbReference>
<dbReference type="CDD" id="cd06503">
    <property type="entry name" value="ATP-synt_Fo_b"/>
    <property type="match status" value="1"/>
</dbReference>
<dbReference type="FunFam" id="3.40.50.300:FF:000830">
    <property type="entry name" value="Endonuclease MutS2"/>
    <property type="match status" value="1"/>
</dbReference>
<dbReference type="Gene3D" id="1.10.1420.10">
    <property type="match status" value="2"/>
</dbReference>
<dbReference type="Gene3D" id="3.30.1370.110">
    <property type="match status" value="1"/>
</dbReference>
<dbReference type="Gene3D" id="3.40.50.300">
    <property type="entry name" value="P-loop containing nucleotide triphosphate hydrolases"/>
    <property type="match status" value="1"/>
</dbReference>
<dbReference type="HAMAP" id="MF_00092">
    <property type="entry name" value="MutS2"/>
    <property type="match status" value="1"/>
</dbReference>
<dbReference type="InterPro" id="IPR000432">
    <property type="entry name" value="DNA_mismatch_repair_MutS_C"/>
</dbReference>
<dbReference type="InterPro" id="IPR007696">
    <property type="entry name" value="DNA_mismatch_repair_MutS_core"/>
</dbReference>
<dbReference type="InterPro" id="IPR036187">
    <property type="entry name" value="DNA_mismatch_repair_MutS_sf"/>
</dbReference>
<dbReference type="InterPro" id="IPR046893">
    <property type="entry name" value="MSSS"/>
</dbReference>
<dbReference type="InterPro" id="IPR045076">
    <property type="entry name" value="MutS"/>
</dbReference>
<dbReference type="InterPro" id="IPR005747">
    <property type="entry name" value="MutS2"/>
</dbReference>
<dbReference type="InterPro" id="IPR027417">
    <property type="entry name" value="P-loop_NTPase"/>
</dbReference>
<dbReference type="InterPro" id="IPR002625">
    <property type="entry name" value="Smr_dom"/>
</dbReference>
<dbReference type="InterPro" id="IPR036063">
    <property type="entry name" value="Smr_dom_sf"/>
</dbReference>
<dbReference type="NCBIfam" id="TIGR01069">
    <property type="entry name" value="mutS2"/>
    <property type="match status" value="1"/>
</dbReference>
<dbReference type="PANTHER" id="PTHR48466:SF2">
    <property type="entry name" value="OS10G0509000 PROTEIN"/>
    <property type="match status" value="1"/>
</dbReference>
<dbReference type="PANTHER" id="PTHR48466">
    <property type="entry name" value="OS10G0509000 PROTEIN-RELATED"/>
    <property type="match status" value="1"/>
</dbReference>
<dbReference type="Pfam" id="PF20297">
    <property type="entry name" value="MSSS"/>
    <property type="match status" value="1"/>
</dbReference>
<dbReference type="Pfam" id="PF00488">
    <property type="entry name" value="MutS_V"/>
    <property type="match status" value="1"/>
</dbReference>
<dbReference type="Pfam" id="PF01713">
    <property type="entry name" value="Smr"/>
    <property type="match status" value="1"/>
</dbReference>
<dbReference type="PIRSF" id="PIRSF005814">
    <property type="entry name" value="MutS_YshD"/>
    <property type="match status" value="1"/>
</dbReference>
<dbReference type="SMART" id="SM00534">
    <property type="entry name" value="MUTSac"/>
    <property type="match status" value="1"/>
</dbReference>
<dbReference type="SMART" id="SM00533">
    <property type="entry name" value="MUTSd"/>
    <property type="match status" value="1"/>
</dbReference>
<dbReference type="SMART" id="SM00463">
    <property type="entry name" value="SMR"/>
    <property type="match status" value="1"/>
</dbReference>
<dbReference type="SUPFAM" id="SSF48334">
    <property type="entry name" value="DNA repair protein MutS, domain III"/>
    <property type="match status" value="1"/>
</dbReference>
<dbReference type="SUPFAM" id="SSF52540">
    <property type="entry name" value="P-loop containing nucleoside triphosphate hydrolases"/>
    <property type="match status" value="1"/>
</dbReference>
<dbReference type="SUPFAM" id="SSF160443">
    <property type="entry name" value="SMR domain-like"/>
    <property type="match status" value="1"/>
</dbReference>
<dbReference type="PROSITE" id="PS00486">
    <property type="entry name" value="DNA_MISMATCH_REPAIR_2"/>
    <property type="match status" value="1"/>
</dbReference>
<dbReference type="PROSITE" id="PS50828">
    <property type="entry name" value="SMR"/>
    <property type="match status" value="1"/>
</dbReference>
<comment type="function">
    <text evidence="1">Endonuclease that is involved in the suppression of homologous recombination and thus may have a key role in the control of bacterial genetic diversity.</text>
</comment>
<comment type="function">
    <text evidence="1">Acts as a ribosome collision sensor, splitting the ribosome into its 2 subunits. Detects stalled/collided 70S ribosomes which it binds and splits by an ATP-hydrolysis driven conformational change. Acts upstream of the ribosome quality control system (RQC), a ribosome-associated complex that mediates the extraction of incompletely synthesized nascent chains from stalled ribosomes and their subsequent degradation. Probably generates substrates for RQC.</text>
</comment>
<comment type="subunit">
    <text evidence="1">Homodimer. Binds to stalled ribosomes, contacting rRNA.</text>
</comment>
<comment type="similarity">
    <text evidence="1">Belongs to the DNA mismatch repair MutS family. MutS2 subfamily.</text>
</comment>
<reference key="1">
    <citation type="submission" date="2009-04" db="EMBL/GenBank/DDBJ databases">
        <title>Genome sequence of Bacillus anthracis A0248.</title>
        <authorList>
            <person name="Dodson R.J."/>
            <person name="Munk A.C."/>
            <person name="Bruce D."/>
            <person name="Detter C."/>
            <person name="Tapia R."/>
            <person name="Sutton G."/>
            <person name="Sims D."/>
            <person name="Brettin T."/>
        </authorList>
    </citation>
    <scope>NUCLEOTIDE SEQUENCE [LARGE SCALE GENOMIC DNA]</scope>
    <source>
        <strain>A0248</strain>
    </source>
</reference>
<accession>C3PAE0</accession>
<keyword id="KW-0067">ATP-binding</keyword>
<keyword id="KW-0238">DNA-binding</keyword>
<keyword id="KW-0255">Endonuclease</keyword>
<keyword id="KW-0378">Hydrolase</keyword>
<keyword id="KW-0540">Nuclease</keyword>
<keyword id="KW-0547">Nucleotide-binding</keyword>
<keyword id="KW-0694">RNA-binding</keyword>
<keyword id="KW-0699">rRNA-binding</keyword>